<protein>
    <recommendedName>
        <fullName>KH domain-containing protein YLL032C</fullName>
    </recommendedName>
</protein>
<gene>
    <name type="ordered locus">YLL032C</name>
</gene>
<evidence type="ECO:0000256" key="1">
    <source>
        <dbReference type="SAM" id="MobiDB-lite"/>
    </source>
</evidence>
<evidence type="ECO:0000269" key="2">
    <source>
    </source>
</evidence>
<evidence type="ECO:0000269" key="3">
    <source>
    </source>
</evidence>
<evidence type="ECO:0007744" key="4">
    <source>
    </source>
</evidence>
<evidence type="ECO:0007744" key="5">
    <source>
    </source>
</evidence>
<evidence type="ECO:0007744" key="6">
    <source>
    </source>
</evidence>
<dbReference type="EMBL" id="Z73137">
    <property type="protein sequence ID" value="CAA97481.1"/>
    <property type="molecule type" value="Genomic_DNA"/>
</dbReference>
<dbReference type="EMBL" id="BK006945">
    <property type="protein sequence ID" value="DAA09289.1"/>
    <property type="molecule type" value="Genomic_DNA"/>
</dbReference>
<dbReference type="PIR" id="S64783">
    <property type="entry name" value="S64783"/>
</dbReference>
<dbReference type="RefSeq" id="NP_013068.1">
    <property type="nucleotide sequence ID" value="NM_001181852.1"/>
</dbReference>
<dbReference type="SMR" id="Q07834"/>
<dbReference type="BioGRID" id="31221">
    <property type="interactions" value="156"/>
</dbReference>
<dbReference type="DIP" id="DIP-1956N"/>
<dbReference type="FunCoup" id="Q07834">
    <property type="interactions" value="47"/>
</dbReference>
<dbReference type="IntAct" id="Q07834">
    <property type="interactions" value="4"/>
</dbReference>
<dbReference type="MINT" id="Q07834"/>
<dbReference type="STRING" id="4932.YLL032C"/>
<dbReference type="GlyGen" id="Q07834">
    <property type="glycosylation" value="1 site, 1 O-linked glycan (1 site)"/>
</dbReference>
<dbReference type="iPTMnet" id="Q07834"/>
<dbReference type="PaxDb" id="4932-YLL032C"/>
<dbReference type="PeptideAtlas" id="Q07834"/>
<dbReference type="EnsemblFungi" id="YLL032C_mRNA">
    <property type="protein sequence ID" value="YLL032C"/>
    <property type="gene ID" value="YLL032C"/>
</dbReference>
<dbReference type="GeneID" id="850627"/>
<dbReference type="KEGG" id="sce:YLL032C"/>
<dbReference type="AGR" id="SGD:S000003955"/>
<dbReference type="SGD" id="S000003955">
    <property type="gene designation" value="YLL032C"/>
</dbReference>
<dbReference type="VEuPathDB" id="FungiDB:YLL032C"/>
<dbReference type="eggNOG" id="KOG2208">
    <property type="taxonomic scope" value="Eukaryota"/>
</dbReference>
<dbReference type="GeneTree" id="ENSGT00940000169857"/>
<dbReference type="HOGENOM" id="CLU_020231_0_0_1"/>
<dbReference type="InParanoid" id="Q07834"/>
<dbReference type="OMA" id="LIKCPRK"/>
<dbReference type="OrthoDB" id="271862at2759"/>
<dbReference type="BioCyc" id="YEAST:G3O-32135-MONOMER"/>
<dbReference type="BioGRID-ORCS" id="850627">
    <property type="hits" value="0 hits in 10 CRISPR screens"/>
</dbReference>
<dbReference type="PRO" id="PR:Q07834"/>
<dbReference type="Proteomes" id="UP000002311">
    <property type="component" value="Chromosome XII"/>
</dbReference>
<dbReference type="RNAct" id="Q07834">
    <property type="molecule type" value="protein"/>
</dbReference>
<dbReference type="GO" id="GO:0005737">
    <property type="term" value="C:cytoplasm"/>
    <property type="evidence" value="ECO:0000314"/>
    <property type="project" value="SGD"/>
</dbReference>
<dbReference type="GO" id="GO:0003729">
    <property type="term" value="F:mRNA binding"/>
    <property type="evidence" value="ECO:0007005"/>
    <property type="project" value="SGD"/>
</dbReference>
<dbReference type="CDD" id="cd22453">
    <property type="entry name" value="KH-I_MUG60_like"/>
    <property type="match status" value="1"/>
</dbReference>
<dbReference type="Gene3D" id="3.30.1370.10">
    <property type="entry name" value="K Homology domain, type 1"/>
    <property type="match status" value="1"/>
</dbReference>
<dbReference type="InterPro" id="IPR004087">
    <property type="entry name" value="KH_dom"/>
</dbReference>
<dbReference type="InterPro" id="IPR036612">
    <property type="entry name" value="KH_dom_type_1_sf"/>
</dbReference>
<dbReference type="SMART" id="SM00322">
    <property type="entry name" value="KH"/>
    <property type="match status" value="1"/>
</dbReference>
<dbReference type="SUPFAM" id="SSF54791">
    <property type="entry name" value="Eukaryotic type KH-domain (KH-domain type I)"/>
    <property type="match status" value="1"/>
</dbReference>
<feature type="chain" id="PRO_0000247115" description="KH domain-containing protein YLL032C">
    <location>
        <begin position="1"/>
        <end position="825"/>
    </location>
</feature>
<feature type="domain" description="KH">
    <location>
        <begin position="482"/>
        <end position="556"/>
    </location>
</feature>
<feature type="region of interest" description="Disordered" evidence="1">
    <location>
        <begin position="727"/>
        <end position="766"/>
    </location>
</feature>
<feature type="compositionally biased region" description="Low complexity" evidence="1">
    <location>
        <begin position="727"/>
        <end position="740"/>
    </location>
</feature>
<feature type="compositionally biased region" description="Polar residues" evidence="1">
    <location>
        <begin position="741"/>
        <end position="762"/>
    </location>
</feature>
<feature type="modified residue" description="Phosphoserine" evidence="4 5 6">
    <location>
        <position position="762"/>
    </location>
</feature>
<name>YL032_YEAST</name>
<accession>Q07834</accession>
<accession>D6VXX3</accession>
<organism>
    <name type="scientific">Saccharomyces cerevisiae (strain ATCC 204508 / S288c)</name>
    <name type="common">Baker's yeast</name>
    <dbReference type="NCBI Taxonomy" id="559292"/>
    <lineage>
        <taxon>Eukaryota</taxon>
        <taxon>Fungi</taxon>
        <taxon>Dikarya</taxon>
        <taxon>Ascomycota</taxon>
        <taxon>Saccharomycotina</taxon>
        <taxon>Saccharomycetes</taxon>
        <taxon>Saccharomycetales</taxon>
        <taxon>Saccharomycetaceae</taxon>
        <taxon>Saccharomyces</taxon>
    </lineage>
</organism>
<reference key="1">
    <citation type="journal article" date="1997" name="Nature">
        <title>The nucleotide sequence of Saccharomyces cerevisiae chromosome XII.</title>
        <authorList>
            <person name="Johnston M."/>
            <person name="Hillier L.W."/>
            <person name="Riles L."/>
            <person name="Albermann K."/>
            <person name="Andre B."/>
            <person name="Ansorge W."/>
            <person name="Benes V."/>
            <person name="Brueckner M."/>
            <person name="Delius H."/>
            <person name="Dubois E."/>
            <person name="Duesterhoeft A."/>
            <person name="Entian K.-D."/>
            <person name="Floeth M."/>
            <person name="Goffeau A."/>
            <person name="Hebling U."/>
            <person name="Heumann K."/>
            <person name="Heuss-Neitzel D."/>
            <person name="Hilbert H."/>
            <person name="Hilger F."/>
            <person name="Kleine K."/>
            <person name="Koetter P."/>
            <person name="Louis E.J."/>
            <person name="Messenguy F."/>
            <person name="Mewes H.-W."/>
            <person name="Miosga T."/>
            <person name="Moestl D."/>
            <person name="Mueller-Auer S."/>
            <person name="Nentwich U."/>
            <person name="Obermaier B."/>
            <person name="Piravandi E."/>
            <person name="Pohl T.M."/>
            <person name="Portetelle D."/>
            <person name="Purnelle B."/>
            <person name="Rechmann S."/>
            <person name="Rieger M."/>
            <person name="Rinke M."/>
            <person name="Rose M."/>
            <person name="Scharfe M."/>
            <person name="Scherens B."/>
            <person name="Scholler P."/>
            <person name="Schwager C."/>
            <person name="Schwarz S."/>
            <person name="Underwood A.P."/>
            <person name="Urrestarazu L.A."/>
            <person name="Vandenbol M."/>
            <person name="Verhasselt P."/>
            <person name="Vierendeels F."/>
            <person name="Voet M."/>
            <person name="Volckaert G."/>
            <person name="Voss H."/>
            <person name="Wambutt R."/>
            <person name="Wedler E."/>
            <person name="Wedler H."/>
            <person name="Zimmermann F.K."/>
            <person name="Zollner A."/>
            <person name="Hani J."/>
            <person name="Hoheisel J.D."/>
        </authorList>
    </citation>
    <scope>NUCLEOTIDE SEQUENCE [LARGE SCALE GENOMIC DNA]</scope>
    <source>
        <strain>ATCC 204508 / S288c</strain>
    </source>
</reference>
<reference key="2">
    <citation type="journal article" date="2014" name="G3 (Bethesda)">
        <title>The reference genome sequence of Saccharomyces cerevisiae: Then and now.</title>
        <authorList>
            <person name="Engel S.R."/>
            <person name="Dietrich F.S."/>
            <person name="Fisk D.G."/>
            <person name="Binkley G."/>
            <person name="Balakrishnan R."/>
            <person name="Costanzo M.C."/>
            <person name="Dwight S.S."/>
            <person name="Hitz B.C."/>
            <person name="Karra K."/>
            <person name="Nash R.S."/>
            <person name="Weng S."/>
            <person name="Wong E.D."/>
            <person name="Lloyd P."/>
            <person name="Skrzypek M.S."/>
            <person name="Miyasato S.R."/>
            <person name="Simison M."/>
            <person name="Cherry J.M."/>
        </authorList>
    </citation>
    <scope>GENOME REANNOTATION</scope>
    <source>
        <strain>ATCC 204508 / S288c</strain>
    </source>
</reference>
<reference key="3">
    <citation type="journal article" date="2003" name="Nature">
        <title>Global analysis of protein localization in budding yeast.</title>
        <authorList>
            <person name="Huh W.-K."/>
            <person name="Falvo J.V."/>
            <person name="Gerke L.C."/>
            <person name="Carroll A.S."/>
            <person name="Howson R.W."/>
            <person name="Weissman J.S."/>
            <person name="O'Shea E.K."/>
        </authorList>
    </citation>
    <scope>SUBCELLULAR LOCATION [LARGE SCALE ANALYSIS]</scope>
</reference>
<reference key="4">
    <citation type="journal article" date="2003" name="Nature">
        <title>Global analysis of protein expression in yeast.</title>
        <authorList>
            <person name="Ghaemmaghami S."/>
            <person name="Huh W.-K."/>
            <person name="Bower K."/>
            <person name="Howson R.W."/>
            <person name="Belle A."/>
            <person name="Dephoure N."/>
            <person name="O'Shea E.K."/>
            <person name="Weissman J.S."/>
        </authorList>
    </citation>
    <scope>LEVEL OF PROTEIN EXPRESSION [LARGE SCALE ANALYSIS]</scope>
</reference>
<reference key="5">
    <citation type="journal article" date="2007" name="Proc. Natl. Acad. Sci. U.S.A.">
        <title>Analysis of phosphorylation sites on proteins from Saccharomyces cerevisiae by electron transfer dissociation (ETD) mass spectrometry.</title>
        <authorList>
            <person name="Chi A."/>
            <person name="Huttenhower C."/>
            <person name="Geer L.Y."/>
            <person name="Coon J.J."/>
            <person name="Syka J.E.P."/>
            <person name="Bai D.L."/>
            <person name="Shabanowitz J."/>
            <person name="Burke D.J."/>
            <person name="Troyanskaya O.G."/>
            <person name="Hunt D.F."/>
        </authorList>
    </citation>
    <scope>PHOSPHORYLATION [LARGE SCALE ANALYSIS] AT SER-762</scope>
    <scope>IDENTIFICATION BY MASS SPECTROMETRY [LARGE SCALE ANALYSIS]</scope>
</reference>
<reference key="6">
    <citation type="journal article" date="2008" name="Mol. Cell. Proteomics">
        <title>A multidimensional chromatography technology for in-depth phosphoproteome analysis.</title>
        <authorList>
            <person name="Albuquerque C.P."/>
            <person name="Smolka M.B."/>
            <person name="Payne S.H."/>
            <person name="Bafna V."/>
            <person name="Eng J."/>
            <person name="Zhou H."/>
        </authorList>
    </citation>
    <scope>PHOSPHORYLATION [LARGE SCALE ANALYSIS] AT SER-762</scope>
    <scope>IDENTIFICATION BY MASS SPECTROMETRY [LARGE SCALE ANALYSIS]</scope>
</reference>
<reference key="7">
    <citation type="journal article" date="2009" name="Science">
        <title>Global analysis of Cdk1 substrate phosphorylation sites provides insights into evolution.</title>
        <authorList>
            <person name="Holt L.J."/>
            <person name="Tuch B.B."/>
            <person name="Villen J."/>
            <person name="Johnson A.D."/>
            <person name="Gygi S.P."/>
            <person name="Morgan D.O."/>
        </authorList>
    </citation>
    <scope>PHOSPHORYLATION [LARGE SCALE ANALYSIS] AT SER-762</scope>
    <scope>IDENTIFICATION BY MASS SPECTROMETRY [LARGE SCALE ANALYSIS]</scope>
</reference>
<sequence length="825" mass="94597">MDNFKIYSTVITTAFLQVPHLYTTNRLWKPIEAPFLVEFLQKRISSKELKNTKAICHIDPSWVNLNASFIRDDMISIKATTDDMDLDAICRISLPLPMNTNDLTAELEKMKRILLDLSEKFNLELIITKEPAYFTPEQTGESKELCIYVHALGFRSNLMECEPQLLAFVDLIKKNGMTLPPQHYIIEPMELNSYSVLPLYMGVDMENFKHISRAFKTSIYAPSLITLSRDLKANPQIFFSGAVHSLSLLARKTLRESISVNSKSFFYRRLTNITPGKLLFIRKYYQQKVNQLILKYQSLIRVTNEYIEFQSISTNLLEMVIKNFTIQVLHEIVEVQISLNENCAMSPELIIDSFFGHTGNQIVVITPKEDSFNQLIVVGNQSSTDEASDTSILHYLSDFIMGSNQVINPNLRQIKAIFEIHPDFEDFISGKKNGKLTRIMELSACLIQLEMEEEDDNLYLNLVSDSFPDFKESFKNVINEFPAEESFFIPEVCHRPIIGTGGSLIQATMRKHNVFIQFSNSFNLPQNKISMIRYDNVIIRCPRKNKANICLAKNDLKQIVQEYDSLQSKTLIRFSSGQYRHILHVNGQKNIIGQIEKNENVYIMIPLKEPLDGTSQLSIQGNDENASRAANELVNSAFGYEYEFKIDQEIDPNKEYEFYNLIVVPFLQIMNIIVTFEKDLITFTFEKDTNENTLTKAIELLSNYLETQKTKIIFKKIIKKFVLGSASSKSNTSNSNTNGNFRSMNNAKSRTTIDNTSQSGASPQRHKMPVITTVGGAQAIKGYIPNTYYNGYGYGYGYTYEYDYNYANSNKAQTNNRHKYQNGRK</sequence>
<keyword id="KW-0963">Cytoplasm</keyword>
<keyword id="KW-0597">Phosphoprotein</keyword>
<keyword id="KW-1185">Reference proteome</keyword>
<keyword id="KW-0694">RNA-binding</keyword>
<comment type="interaction">
    <interactant intactId="EBI-36507">
        <id>Q07834</id>
    </interactant>
    <interactant intactId="EBI-27965">
        <id>Q03208</id>
        <label>YML119W</label>
    </interactant>
    <organismsDiffer>false</organismsDiffer>
    <experiments>3</experiments>
</comment>
<comment type="subcellular location">
    <subcellularLocation>
        <location evidence="2">Cytoplasm</location>
    </subcellularLocation>
</comment>
<comment type="miscellaneous">
    <text evidence="3">Present with 922 molecules/cell in log phase SD medium.</text>
</comment>
<proteinExistence type="evidence at protein level"/>